<protein>
    <recommendedName>
        <fullName>Pyrophosphate-energized vacuolar membrane proton pump</fullName>
        <ecNumber>7.1.3.1</ecNumber>
    </recommendedName>
    <alternativeName>
        <fullName>Pyrophosphate-energized inorganic pyrophosphatase</fullName>
        <shortName>H(+)-PPase</shortName>
    </alternativeName>
</protein>
<name>AVP_HORVU</name>
<feature type="chain" id="PRO_0000217042" description="Pyrophosphate-energized vacuolar membrane proton pump">
    <location>
        <begin position="1"/>
        <end position="762"/>
    </location>
</feature>
<feature type="topological domain" description="Intravacuolar" evidence="1">
    <location>
        <begin position="1"/>
        <end position="6"/>
    </location>
</feature>
<feature type="transmembrane region" description="Helical" evidence="1">
    <location>
        <begin position="7"/>
        <end position="33"/>
    </location>
</feature>
<feature type="topological domain" description="Cytoplasmic" evidence="1">
    <location>
        <begin position="34"/>
        <end position="81"/>
    </location>
</feature>
<feature type="transmembrane region" description="Helical" evidence="1">
    <location>
        <begin position="82"/>
        <end position="111"/>
    </location>
</feature>
<feature type="topological domain" description="Intravacuolar" evidence="1">
    <location>
        <begin position="112"/>
        <end position="131"/>
    </location>
</feature>
<feature type="transmembrane region" description="Helical" evidence="1">
    <location>
        <begin position="132"/>
        <end position="159"/>
    </location>
</feature>
<feature type="topological domain" description="Cytoplasmic" evidence="1">
    <location>
        <begin position="160"/>
        <end position="182"/>
    </location>
</feature>
<feature type="transmembrane region" description="Helical" evidence="1">
    <location>
        <begin position="183"/>
        <end position="212"/>
    </location>
</feature>
<feature type="topological domain" description="Intravacuolar" evidence="1">
    <location>
        <begin position="213"/>
        <end position="215"/>
    </location>
</feature>
<feature type="transmembrane region" description="Helical" evidence="1">
    <location>
        <begin position="216"/>
        <end position="244"/>
    </location>
</feature>
<feature type="topological domain" description="Cytoplasmic" evidence="1">
    <location>
        <begin position="245"/>
        <end position="282"/>
    </location>
</feature>
<feature type="transmembrane region" description="Helical" evidence="1">
    <location>
        <begin position="283"/>
        <end position="308"/>
    </location>
</feature>
<feature type="topological domain" description="Intravacuolar" evidence="1">
    <location>
        <begin position="309"/>
        <end position="316"/>
    </location>
</feature>
<feature type="transmembrane region" description="Helical" evidence="1">
    <location>
        <begin position="317"/>
        <end position="342"/>
    </location>
</feature>
<feature type="topological domain" description="Cytoplasmic" evidence="1">
    <location>
        <begin position="343"/>
        <end position="350"/>
    </location>
</feature>
<feature type="transmembrane region" description="Helical" evidence="1">
    <location>
        <begin position="351"/>
        <end position="378"/>
    </location>
</feature>
<feature type="topological domain" description="Intravacuolar" evidence="1">
    <location>
        <begin position="379"/>
        <end position="397"/>
    </location>
</feature>
<feature type="transmembrane region" description="Helical" evidence="1">
    <location>
        <begin position="398"/>
        <end position="421"/>
    </location>
</feature>
<feature type="topological domain" description="Cytoplasmic" evidence="1">
    <location>
        <begin position="422"/>
        <end position="443"/>
    </location>
</feature>
<feature type="transmembrane region" description="Helical" evidence="1">
    <location>
        <begin position="444"/>
        <end position="468"/>
    </location>
</feature>
<feature type="topological domain" description="Intravacuolar" evidence="1">
    <location>
        <begin position="469"/>
        <end position="474"/>
    </location>
</feature>
<feature type="transmembrane region" description="Helical" evidence="1">
    <location>
        <begin position="475"/>
        <end position="501"/>
    </location>
</feature>
<feature type="topological domain" description="Cytoplasmic" evidence="1">
    <location>
        <begin position="502"/>
        <end position="530"/>
    </location>
</feature>
<feature type="transmembrane region" description="Helical" evidence="1">
    <location>
        <begin position="531"/>
        <end position="559"/>
    </location>
</feature>
<feature type="topological domain" description="Intravacuolar" evidence="1">
    <location>
        <begin position="560"/>
        <end position="569"/>
    </location>
</feature>
<feature type="transmembrane region" description="Helical" evidence="1">
    <location>
        <begin position="570"/>
        <end position="598"/>
    </location>
</feature>
<feature type="topological domain" description="Cytoplasmic" evidence="1">
    <location>
        <begin position="599"/>
        <end position="627"/>
    </location>
</feature>
<feature type="transmembrane region" description="Helical" evidence="1">
    <location>
        <begin position="628"/>
        <end position="656"/>
    </location>
</feature>
<feature type="topological domain" description="Intravacuolar" evidence="1">
    <location>
        <position position="657"/>
    </location>
</feature>
<feature type="transmembrane region" description="Helical" evidence="1">
    <location>
        <begin position="658"/>
        <end position="685"/>
    </location>
</feature>
<feature type="topological domain" description="Cytoplasmic" evidence="1">
    <location>
        <begin position="686"/>
        <end position="728"/>
    </location>
</feature>
<feature type="transmembrane region" description="Helical" evidence="1">
    <location>
        <begin position="729"/>
        <end position="754"/>
    </location>
</feature>
<feature type="topological domain" description="Intravacuolar" evidence="1">
    <location>
        <begin position="755"/>
        <end position="762"/>
    </location>
</feature>
<feature type="binding site" evidence="1">
    <location>
        <position position="246"/>
    </location>
    <ligand>
        <name>substrate</name>
    </ligand>
</feature>
<feature type="binding site" evidence="1">
    <location>
        <position position="249"/>
    </location>
    <ligand>
        <name>Mg(2+)</name>
        <dbReference type="ChEBI" id="CHEBI:18420"/>
        <label>1</label>
    </ligand>
</feature>
<feature type="binding site" evidence="1">
    <location>
        <position position="249"/>
    </location>
    <ligand>
        <name>Mg(2+)</name>
        <dbReference type="ChEBI" id="CHEBI:18420"/>
        <label>2</label>
    </ligand>
</feature>
<feature type="binding site" evidence="1">
    <location>
        <position position="253"/>
    </location>
    <ligand>
        <name>Mg(2+)</name>
        <dbReference type="ChEBI" id="CHEBI:18420"/>
        <label>1</label>
    </ligand>
</feature>
<feature type="binding site" evidence="1">
    <location>
        <position position="279"/>
    </location>
    <ligand>
        <name>Mg(2+)</name>
        <dbReference type="ChEBI" id="CHEBI:18420"/>
        <label>3</label>
    </ligand>
</feature>
<feature type="binding site" evidence="1">
    <location>
        <position position="503"/>
    </location>
    <ligand>
        <name>Mg(2+)</name>
        <dbReference type="ChEBI" id="CHEBI:18420"/>
        <label>3</label>
    </ligand>
</feature>
<feature type="binding site" evidence="1">
    <location>
        <position position="530"/>
    </location>
    <ligand>
        <name>Mg(2+)</name>
        <dbReference type="ChEBI" id="CHEBI:18420"/>
        <label>4</label>
    </ligand>
</feature>
<feature type="binding site" evidence="1">
    <location>
        <position position="687"/>
    </location>
    <ligand>
        <name>Mg(2+)</name>
        <dbReference type="ChEBI" id="CHEBI:18420"/>
        <label>4</label>
    </ligand>
</feature>
<feature type="binding site" evidence="1">
    <location>
        <position position="723"/>
    </location>
    <ligand>
        <name>Mg(2+)</name>
        <dbReference type="ChEBI" id="CHEBI:18420"/>
        <label>2</label>
    </ligand>
</feature>
<feature type="binding site" evidence="1">
    <location>
        <position position="726"/>
    </location>
    <ligand>
        <name>substrate</name>
    </ligand>
</feature>
<feature type="site" description="Important for proton transport" evidence="1">
    <location>
        <position position="238"/>
    </location>
</feature>
<feature type="site" description="Important for proton transport" evidence="1">
    <location>
        <position position="283"/>
    </location>
</feature>
<feature type="site" description="Important for proton transport" evidence="1">
    <location>
        <position position="290"/>
    </location>
</feature>
<feature type="site" description="Important for proton transport" evidence="1">
    <location>
        <position position="297"/>
    </location>
</feature>
<feature type="site" description="Important for proton transport" evidence="1">
    <location>
        <position position="727"/>
    </location>
</feature>
<feature type="site" description="Important for proton transport" evidence="1">
    <location>
        <position position="738"/>
    </location>
</feature>
<feature type="disulfide bond" evidence="1">
    <location>
        <begin position="121"/>
        <end position="128"/>
    </location>
</feature>
<organism>
    <name type="scientific">Hordeum vulgare</name>
    <name type="common">Barley</name>
    <dbReference type="NCBI Taxonomy" id="4513"/>
    <lineage>
        <taxon>Eukaryota</taxon>
        <taxon>Viridiplantae</taxon>
        <taxon>Streptophyta</taxon>
        <taxon>Embryophyta</taxon>
        <taxon>Tracheophyta</taxon>
        <taxon>Spermatophyta</taxon>
        <taxon>Magnoliopsida</taxon>
        <taxon>Liliopsida</taxon>
        <taxon>Poales</taxon>
        <taxon>Poaceae</taxon>
        <taxon>BOP clade</taxon>
        <taxon>Pooideae</taxon>
        <taxon>Triticodae</taxon>
        <taxon>Triticeae</taxon>
        <taxon>Hordeinae</taxon>
        <taxon>Hordeum</taxon>
    </lineage>
</organism>
<evidence type="ECO:0000250" key="1"/>
<evidence type="ECO:0000305" key="2"/>
<sequence>MAILGELGTEILIPVCGVIGIVFAVAQWFIVSKVKVTPGAASAAAGAKNGYGDYLIEEEEGLNDHNVVVKCAEIQTAISEGATSFLFTMYQYVGMFMVVFAAIIFLFLGSIEGFSTKGQPCTYSKGTCKPALYTALFSTASFLLGAITSLVSGFLGMKIATYANARTTLEARKGVGKAFITAFRSGAVMGFLLSSSGLVVLYITINVFKMYYGDDWEGLFESITGYGLGGSSMALFGRVGGGIYTKAADVGADLVGKVERNIPEDDPRNPAVIADNVGDNVGDIAGMGSDLFGSYAESSCAALVVASISSFGINHDFTAMCYPLLVSSVGIIVCLLTTLFATDFFEIKAANEIEPALKKQLIISTALMTVGVAVISWLALPAKFTIFNFGAQKEVSNWGLFFCVAVGLWAGLIIGFVTEYYTSNAYSPVQDVADSCRTGAATNVIFGLALGYKSVIIPIFAIAVSIYVSFSIAAMYGIAMAALGMLSTMATGLAIDAYGPISDNAGGIAEMAGMSHRIRERTDALDAAGNTTAAIGKGFAIGSAALVSLALFGAFVSRAGVKVVDVLSPKVFIGLIVGAMLPYWFSAMTMKSVGSAALKMVEEVRRQFNTIPGLMEGTAKPDYATCVKISTDASIKEMIPPGALVMLTPLIVGTLFGVETLSGVLAGALVSGVQIAISASNTGGAWDNAKKYIEAGNSEHARSLGPKGSDCHKAAVIGDTIGDPLKDTSGPSLNILIKLMAVESLVFAPFFATYGGLLFKYI</sequence>
<proteinExistence type="evidence at transcript level"/>
<comment type="function">
    <text>Contributes to the transtonoplast (from cytosol to vacuole lumen) H(+)-electrochemical potential difference. It establishes a proton gradient of similar and often greater magnitude than the H(+)-ATPase on the same membrane.</text>
</comment>
<comment type="catalytic activity">
    <reaction>
        <text>diphosphate + H2O + H(+)(in) = 2 phosphate + 2 H(+)(out)</text>
        <dbReference type="Rhea" id="RHEA:13973"/>
        <dbReference type="ChEBI" id="CHEBI:15377"/>
        <dbReference type="ChEBI" id="CHEBI:15378"/>
        <dbReference type="ChEBI" id="CHEBI:33019"/>
        <dbReference type="ChEBI" id="CHEBI:43474"/>
        <dbReference type="EC" id="7.1.3.1"/>
    </reaction>
</comment>
<comment type="subunit">
    <text evidence="1">Monomer.</text>
</comment>
<comment type="subcellular location">
    <subcellularLocation>
        <location>Vacuole membrane</location>
        <topology>Multi-pass membrane protein</topology>
    </subcellularLocation>
    <text>Tonoplast.</text>
</comment>
<comment type="domain">
    <text evidence="1">Has 16 transmembrane helices and a cytoplasmic domain that contains the active site.</text>
</comment>
<comment type="miscellaneous">
    <text evidence="1">Has few direct interactions with pyrophosphate. Interacts with the substrate via divalent metal cations, such as magnesium ions, that are bound to the pyrophosphate (By similarity).</text>
</comment>
<comment type="similarity">
    <text evidence="2">Belongs to the H(+)-translocating pyrophosphatase (TC 3.A.10) family. K(+)-stimulated subfamily.</text>
</comment>
<accession>Q06572</accession>
<dbReference type="EC" id="7.1.3.1"/>
<dbReference type="EMBL" id="D13472">
    <property type="protein sequence ID" value="BAA02717.2"/>
    <property type="molecule type" value="mRNA"/>
</dbReference>
<dbReference type="PIR" id="JC1466">
    <property type="entry name" value="JC1466"/>
</dbReference>
<dbReference type="SMR" id="Q06572"/>
<dbReference type="ExpressionAtlas" id="Q06572">
    <property type="expression patterns" value="baseline and differential"/>
</dbReference>
<dbReference type="GO" id="GO:0005774">
    <property type="term" value="C:vacuolar membrane"/>
    <property type="evidence" value="ECO:0007669"/>
    <property type="project" value="UniProtKB-SubCell"/>
</dbReference>
<dbReference type="GO" id="GO:0009678">
    <property type="term" value="F:diphosphate hydrolysis-driven proton transmembrane transporter activity"/>
    <property type="evidence" value="ECO:0007669"/>
    <property type="project" value="UniProtKB-EC"/>
</dbReference>
<dbReference type="GO" id="GO:0004427">
    <property type="term" value="F:inorganic diphosphate phosphatase activity"/>
    <property type="evidence" value="ECO:0007669"/>
    <property type="project" value="InterPro"/>
</dbReference>
<dbReference type="GO" id="GO:0046872">
    <property type="term" value="F:metal ion binding"/>
    <property type="evidence" value="ECO:0007669"/>
    <property type="project" value="UniProtKB-KW"/>
</dbReference>
<dbReference type="HAMAP" id="MF_01129">
    <property type="entry name" value="PPase_energized_pump"/>
    <property type="match status" value="1"/>
</dbReference>
<dbReference type="InterPro" id="IPR004131">
    <property type="entry name" value="PPase-energised_H-pump"/>
</dbReference>
<dbReference type="NCBIfam" id="NF001960">
    <property type="entry name" value="PRK00733.3-5"/>
    <property type="match status" value="1"/>
</dbReference>
<dbReference type="NCBIfam" id="TIGR01104">
    <property type="entry name" value="V_PPase"/>
    <property type="match status" value="1"/>
</dbReference>
<dbReference type="PANTHER" id="PTHR31998">
    <property type="entry name" value="K(+)-INSENSITIVE PYROPHOSPHATE-ENERGIZED PROTON PUMP"/>
    <property type="match status" value="1"/>
</dbReference>
<dbReference type="Pfam" id="PF03030">
    <property type="entry name" value="H_PPase"/>
    <property type="match status" value="1"/>
</dbReference>
<dbReference type="PIRSF" id="PIRSF001265">
    <property type="entry name" value="H+-PPase"/>
    <property type="match status" value="1"/>
</dbReference>
<reference key="1">
    <citation type="journal article" date="1993" name="Biochem. Biophys. Res. Commun.">
        <title>Molecular cloning of cDNA for vacuolar membrane proton-translocating inorganic pyrophosphatase in Hordeum vulgare.</title>
        <authorList>
            <person name="Tanaka Y."/>
            <person name="Chiba K."/>
            <person name="Maeda M."/>
            <person name="Maeshima M."/>
        </authorList>
    </citation>
    <scope>NUCLEOTIDE SEQUENCE [MRNA]</scope>
    <source>
        <strain>cv. Kashima</strain>
        <tissue>Root</tissue>
    </source>
</reference>
<reference key="2">
    <citation type="submission" date="1999-10" db="EMBL/GenBank/DDBJ databases">
        <authorList>
            <person name="Tanaka Y."/>
        </authorList>
    </citation>
    <scope>SEQUENCE REVISION TO 41-45</scope>
</reference>
<keyword id="KW-1015">Disulfide bond</keyword>
<keyword id="KW-0375">Hydrogen ion transport</keyword>
<keyword id="KW-0406">Ion transport</keyword>
<keyword id="KW-0460">Magnesium</keyword>
<keyword id="KW-0472">Membrane</keyword>
<keyword id="KW-0479">Metal-binding</keyword>
<keyword id="KW-1278">Translocase</keyword>
<keyword id="KW-0812">Transmembrane</keyword>
<keyword id="KW-1133">Transmembrane helix</keyword>
<keyword id="KW-0813">Transport</keyword>
<keyword id="KW-0926">Vacuole</keyword>